<keyword id="KW-0665">Pyrimidine biosynthesis</keyword>
<keyword id="KW-0808">Transferase</keyword>
<gene>
    <name evidence="1" type="primary">pyrB</name>
    <name type="ordered locus">EcolC_3766</name>
</gene>
<name>PYRB_ECOLC</name>
<dbReference type="EC" id="2.1.3.2" evidence="1"/>
<dbReference type="EMBL" id="CP000946">
    <property type="protein sequence ID" value="ACA79371.1"/>
    <property type="molecule type" value="Genomic_DNA"/>
</dbReference>
<dbReference type="RefSeq" id="WP_000013046.1">
    <property type="nucleotide sequence ID" value="NZ_MTFT01000012.1"/>
</dbReference>
<dbReference type="BMRB" id="B1ISW0"/>
<dbReference type="SMR" id="B1ISW0"/>
<dbReference type="GeneID" id="93777579"/>
<dbReference type="KEGG" id="ecl:EcolC_3766"/>
<dbReference type="HOGENOM" id="CLU_043846_1_2_6"/>
<dbReference type="UniPathway" id="UPA00070">
    <property type="reaction ID" value="UER00116"/>
</dbReference>
<dbReference type="GO" id="GO:0005829">
    <property type="term" value="C:cytosol"/>
    <property type="evidence" value="ECO:0007669"/>
    <property type="project" value="TreeGrafter"/>
</dbReference>
<dbReference type="GO" id="GO:0016597">
    <property type="term" value="F:amino acid binding"/>
    <property type="evidence" value="ECO:0007669"/>
    <property type="project" value="InterPro"/>
</dbReference>
<dbReference type="GO" id="GO:0004070">
    <property type="term" value="F:aspartate carbamoyltransferase activity"/>
    <property type="evidence" value="ECO:0007669"/>
    <property type="project" value="UniProtKB-UniRule"/>
</dbReference>
<dbReference type="GO" id="GO:0006207">
    <property type="term" value="P:'de novo' pyrimidine nucleobase biosynthetic process"/>
    <property type="evidence" value="ECO:0007669"/>
    <property type="project" value="InterPro"/>
</dbReference>
<dbReference type="GO" id="GO:0044205">
    <property type="term" value="P:'de novo' UMP biosynthetic process"/>
    <property type="evidence" value="ECO:0007669"/>
    <property type="project" value="UniProtKB-UniRule"/>
</dbReference>
<dbReference type="GO" id="GO:0006520">
    <property type="term" value="P:amino acid metabolic process"/>
    <property type="evidence" value="ECO:0007669"/>
    <property type="project" value="InterPro"/>
</dbReference>
<dbReference type="FunFam" id="3.40.50.1370:FF:000001">
    <property type="entry name" value="Aspartate carbamoyltransferase"/>
    <property type="match status" value="1"/>
</dbReference>
<dbReference type="FunFam" id="3.40.50.1370:FF:000002">
    <property type="entry name" value="Aspartate carbamoyltransferase 2"/>
    <property type="match status" value="1"/>
</dbReference>
<dbReference type="Gene3D" id="3.40.50.1370">
    <property type="entry name" value="Aspartate/ornithine carbamoyltransferase"/>
    <property type="match status" value="2"/>
</dbReference>
<dbReference type="HAMAP" id="MF_00001">
    <property type="entry name" value="Asp_carb_tr"/>
    <property type="match status" value="1"/>
</dbReference>
<dbReference type="InterPro" id="IPR006132">
    <property type="entry name" value="Asp/Orn_carbamoyltranf_P-bd"/>
</dbReference>
<dbReference type="InterPro" id="IPR006130">
    <property type="entry name" value="Asp/Orn_carbamoylTrfase"/>
</dbReference>
<dbReference type="InterPro" id="IPR036901">
    <property type="entry name" value="Asp/Orn_carbamoylTrfase_sf"/>
</dbReference>
<dbReference type="InterPro" id="IPR002082">
    <property type="entry name" value="Asp_carbamoyltransf"/>
</dbReference>
<dbReference type="InterPro" id="IPR006131">
    <property type="entry name" value="Asp_carbamoyltransf_Asp/Orn-bd"/>
</dbReference>
<dbReference type="NCBIfam" id="TIGR00670">
    <property type="entry name" value="asp_carb_tr"/>
    <property type="match status" value="1"/>
</dbReference>
<dbReference type="NCBIfam" id="NF002032">
    <property type="entry name" value="PRK00856.1"/>
    <property type="match status" value="1"/>
</dbReference>
<dbReference type="PANTHER" id="PTHR45753:SF6">
    <property type="entry name" value="ASPARTATE CARBAMOYLTRANSFERASE"/>
    <property type="match status" value="1"/>
</dbReference>
<dbReference type="PANTHER" id="PTHR45753">
    <property type="entry name" value="ORNITHINE CARBAMOYLTRANSFERASE, MITOCHONDRIAL"/>
    <property type="match status" value="1"/>
</dbReference>
<dbReference type="Pfam" id="PF00185">
    <property type="entry name" value="OTCace"/>
    <property type="match status" value="1"/>
</dbReference>
<dbReference type="Pfam" id="PF02729">
    <property type="entry name" value="OTCace_N"/>
    <property type="match status" value="1"/>
</dbReference>
<dbReference type="PRINTS" id="PR00100">
    <property type="entry name" value="AOTCASE"/>
</dbReference>
<dbReference type="PRINTS" id="PR00101">
    <property type="entry name" value="ATCASE"/>
</dbReference>
<dbReference type="SUPFAM" id="SSF53671">
    <property type="entry name" value="Aspartate/ornithine carbamoyltransferase"/>
    <property type="match status" value="1"/>
</dbReference>
<dbReference type="PROSITE" id="PS00097">
    <property type="entry name" value="CARBAMOYLTRANSFERASE"/>
    <property type="match status" value="1"/>
</dbReference>
<accession>B1ISW0</accession>
<sequence>MANPLYQKHIISINDLSRDDLNLVLATAAKLKANPQPELLKHKVIASCFFEASTRTRLSFETSMHRLGASVVGFSDSANTSLGKKGETLADTISVISTYVDAIVMRHPQEGAARLATEFSGNVPVLNAGDGSNQHPTQTLLDLFTIQETQGRLDNLHVAMVGDLKYGRTVHSLTQALAKFDGNRFYFIAPDALAMPQYILDMLDEKGIAWSLHSSIEEVMAEVDILYMTRVQKERLDPSEYANVKAQFVLRASDLHNAKANMKVLHPLPRVDEIATDVDKTPHAWYFQQAGNGIFARQALLALVLNRDLVL</sequence>
<proteinExistence type="inferred from homology"/>
<organism>
    <name type="scientific">Escherichia coli (strain ATCC 8739 / DSM 1576 / NBRC 3972 / NCIMB 8545 / WDCM 00012 / Crooks)</name>
    <dbReference type="NCBI Taxonomy" id="481805"/>
    <lineage>
        <taxon>Bacteria</taxon>
        <taxon>Pseudomonadati</taxon>
        <taxon>Pseudomonadota</taxon>
        <taxon>Gammaproteobacteria</taxon>
        <taxon>Enterobacterales</taxon>
        <taxon>Enterobacteriaceae</taxon>
        <taxon>Escherichia</taxon>
    </lineage>
</organism>
<feature type="chain" id="PRO_1000073729" description="Aspartate carbamoyltransferase catalytic subunit">
    <location>
        <begin position="1"/>
        <end position="311"/>
    </location>
</feature>
<feature type="binding site" evidence="1">
    <location>
        <position position="55"/>
    </location>
    <ligand>
        <name>carbamoyl phosphate</name>
        <dbReference type="ChEBI" id="CHEBI:58228"/>
    </ligand>
</feature>
<feature type="binding site" evidence="1">
    <location>
        <position position="56"/>
    </location>
    <ligand>
        <name>carbamoyl phosphate</name>
        <dbReference type="ChEBI" id="CHEBI:58228"/>
    </ligand>
</feature>
<feature type="binding site" evidence="1">
    <location>
        <position position="85"/>
    </location>
    <ligand>
        <name>L-aspartate</name>
        <dbReference type="ChEBI" id="CHEBI:29991"/>
    </ligand>
</feature>
<feature type="binding site" evidence="1">
    <location>
        <position position="106"/>
    </location>
    <ligand>
        <name>carbamoyl phosphate</name>
        <dbReference type="ChEBI" id="CHEBI:58228"/>
    </ligand>
</feature>
<feature type="binding site" evidence="1">
    <location>
        <position position="135"/>
    </location>
    <ligand>
        <name>carbamoyl phosphate</name>
        <dbReference type="ChEBI" id="CHEBI:58228"/>
    </ligand>
</feature>
<feature type="binding site" evidence="1">
    <location>
        <position position="138"/>
    </location>
    <ligand>
        <name>carbamoyl phosphate</name>
        <dbReference type="ChEBI" id="CHEBI:58228"/>
    </ligand>
</feature>
<feature type="binding site" evidence="1">
    <location>
        <position position="168"/>
    </location>
    <ligand>
        <name>L-aspartate</name>
        <dbReference type="ChEBI" id="CHEBI:29991"/>
    </ligand>
</feature>
<feature type="binding site" evidence="1">
    <location>
        <position position="230"/>
    </location>
    <ligand>
        <name>L-aspartate</name>
        <dbReference type="ChEBI" id="CHEBI:29991"/>
    </ligand>
</feature>
<feature type="binding site" evidence="1">
    <location>
        <position position="268"/>
    </location>
    <ligand>
        <name>carbamoyl phosphate</name>
        <dbReference type="ChEBI" id="CHEBI:58228"/>
    </ligand>
</feature>
<feature type="binding site" evidence="1">
    <location>
        <position position="269"/>
    </location>
    <ligand>
        <name>carbamoyl phosphate</name>
        <dbReference type="ChEBI" id="CHEBI:58228"/>
    </ligand>
</feature>
<protein>
    <recommendedName>
        <fullName evidence="1">Aspartate carbamoyltransferase catalytic subunit</fullName>
        <ecNumber evidence="1">2.1.3.2</ecNumber>
    </recommendedName>
    <alternativeName>
        <fullName evidence="1">Aspartate transcarbamylase</fullName>
        <shortName evidence="1">ATCase</shortName>
    </alternativeName>
</protein>
<reference key="1">
    <citation type="submission" date="2008-02" db="EMBL/GenBank/DDBJ databases">
        <title>Complete sequence of Escherichia coli C str. ATCC 8739.</title>
        <authorList>
            <person name="Copeland A."/>
            <person name="Lucas S."/>
            <person name="Lapidus A."/>
            <person name="Glavina del Rio T."/>
            <person name="Dalin E."/>
            <person name="Tice H."/>
            <person name="Bruce D."/>
            <person name="Goodwin L."/>
            <person name="Pitluck S."/>
            <person name="Kiss H."/>
            <person name="Brettin T."/>
            <person name="Detter J.C."/>
            <person name="Han C."/>
            <person name="Kuske C.R."/>
            <person name="Schmutz J."/>
            <person name="Larimer F."/>
            <person name="Land M."/>
            <person name="Hauser L."/>
            <person name="Kyrpides N."/>
            <person name="Mikhailova N."/>
            <person name="Ingram L."/>
            <person name="Richardson P."/>
        </authorList>
    </citation>
    <scope>NUCLEOTIDE SEQUENCE [LARGE SCALE GENOMIC DNA]</scope>
    <source>
        <strain>ATCC 8739 / DSM 1576 / NBRC 3972 / NCIMB 8545 / WDCM 00012 / Crooks</strain>
    </source>
</reference>
<evidence type="ECO:0000255" key="1">
    <source>
        <dbReference type="HAMAP-Rule" id="MF_00001"/>
    </source>
</evidence>
<comment type="function">
    <text evidence="1">Catalyzes the condensation of carbamoyl phosphate and aspartate to form carbamoyl aspartate and inorganic phosphate, the committed step in the de novo pyrimidine nucleotide biosynthesis pathway.</text>
</comment>
<comment type="catalytic activity">
    <reaction evidence="1">
        <text>carbamoyl phosphate + L-aspartate = N-carbamoyl-L-aspartate + phosphate + H(+)</text>
        <dbReference type="Rhea" id="RHEA:20013"/>
        <dbReference type="ChEBI" id="CHEBI:15378"/>
        <dbReference type="ChEBI" id="CHEBI:29991"/>
        <dbReference type="ChEBI" id="CHEBI:32814"/>
        <dbReference type="ChEBI" id="CHEBI:43474"/>
        <dbReference type="ChEBI" id="CHEBI:58228"/>
        <dbReference type="EC" id="2.1.3.2"/>
    </reaction>
</comment>
<comment type="pathway">
    <text evidence="1">Pyrimidine metabolism; UMP biosynthesis via de novo pathway; (S)-dihydroorotate from bicarbonate: step 2/3.</text>
</comment>
<comment type="subunit">
    <text evidence="1">Heterododecamer (2C3:3R2) of six catalytic PyrB chains organized as two trimers (C3), and six regulatory PyrI chains organized as three dimers (R2).</text>
</comment>
<comment type="similarity">
    <text evidence="1">Belongs to the aspartate/ornithine carbamoyltransferase superfamily. ATCase family.</text>
</comment>